<keyword id="KW-1015">Disulfide bond</keyword>
<keyword id="KW-0325">Glycoprotein</keyword>
<keyword id="KW-0378">Hydrolase</keyword>
<keyword id="KW-0442">Lipid degradation</keyword>
<keyword id="KW-0443">Lipid metabolism</keyword>
<keyword id="KW-1185">Reference proteome</keyword>
<keyword id="KW-0677">Repeat</keyword>
<keyword id="KW-0964">Secreted</keyword>
<keyword id="KW-0719">Serine esterase</keyword>
<keyword id="KW-0732">Signal</keyword>
<reference key="1">
    <citation type="journal article" date="1995" name="Gene">
        <title>Characterization of the mouse pancreatic/mammary gland cholesterol esterase-encoding cDNA and gene.</title>
        <authorList>
            <person name="Mackay K."/>
            <person name="Lawn R.M."/>
        </authorList>
    </citation>
    <scope>NUCLEOTIDE SEQUENCE [MRNA]</scope>
    <source>
        <strain>BALB/cJ</strain>
        <tissue>Mammary gland</tissue>
    </source>
</reference>
<reference key="2">
    <citation type="journal article" date="1995" name="Genomics">
        <title>Molecular cloning and characterization of the mouse carboxyl ester lipase gene and evidence for expression in the lactating mammary gland.</title>
        <authorList>
            <person name="Lidmer A.S."/>
            <person name="Kannius M."/>
            <person name="Lundberg L."/>
            <person name="Bjursell G."/>
            <person name="Nilsson J."/>
        </authorList>
    </citation>
    <scope>NUCLEOTIDE SEQUENCE [MRNA]</scope>
    <source>
        <strain>BALB/cJ</strain>
        <tissue>Lactating mammary gland</tissue>
    </source>
</reference>
<reference key="3">
    <citation type="journal article" date="2002" name="J. Biol. Chem.">
        <title>Charcot-Leyden crystal protein (galectin-10) is not a dual function galectin with lysophospholipase activity but binds a lysophospholipase inhibitor in a novel structural fashion.</title>
        <authorList>
            <person name="Ackerman S.J."/>
            <person name="Liu L."/>
            <person name="Kwatia M.A."/>
            <person name="Savage M.P."/>
            <person name="Leonidas D.D."/>
            <person name="Swaminathan G.J."/>
            <person name="Acharya K.R."/>
        </authorList>
    </citation>
    <scope>INTERACTION WITH CLC</scope>
    <scope>TISSUE SPECIFICITY</scope>
</reference>
<reference key="4">
    <citation type="journal article" date="2010" name="Cell">
        <title>A tissue-specific atlas of mouse protein phosphorylation and expression.</title>
        <authorList>
            <person name="Huttlin E.L."/>
            <person name="Jedrychowski M.P."/>
            <person name="Elias J.E."/>
            <person name="Goswami T."/>
            <person name="Rad R."/>
            <person name="Beausoleil S.A."/>
            <person name="Villen J."/>
            <person name="Haas W."/>
            <person name="Sowa M.E."/>
            <person name="Gygi S.P."/>
        </authorList>
    </citation>
    <scope>IDENTIFICATION BY MASS SPECTROMETRY [LARGE SCALE ANALYSIS]</scope>
    <source>
        <tissue>Liver</tissue>
        <tissue>Lung</tissue>
        <tissue>Pancreas</tissue>
        <tissue>Spleen</tissue>
    </source>
</reference>
<reference key="5">
    <citation type="journal article" date="2016" name="Biochemistry">
        <title>Branched fatty acid esters of hydroxy fatty acids are preferred substrates of the MODY8 protein carboxyl ester lipase.</title>
        <authorList>
            <person name="Kolar M.J."/>
            <person name="Kamat S.S."/>
            <person name="Parsons W.H."/>
            <person name="Homan E.A."/>
            <person name="Maher T."/>
            <person name="Peroni O.D."/>
            <person name="Syed I."/>
            <person name="Fjeld K."/>
            <person name="Molven A."/>
            <person name="Kahn B.B."/>
            <person name="Cravatt B.F."/>
            <person name="Saghatelian A."/>
        </authorList>
    </citation>
    <scope>FUNCTION</scope>
    <scope>CATALYTIC ACTIVITY</scope>
    <scope>ACTIVITY REGULATION</scope>
</reference>
<dbReference type="EC" id="3.1.1.13" evidence="3"/>
<dbReference type="EC" id="3.1.1.3" evidence="3"/>
<dbReference type="EC" id="3.1.1.6" evidence="3"/>
<dbReference type="EMBL" id="U33169">
    <property type="protein sequence ID" value="AAA92088.1"/>
    <property type="molecule type" value="mRNA"/>
</dbReference>
<dbReference type="EMBL" id="U37386">
    <property type="protein sequence ID" value="AAC52279.1"/>
    <property type="molecule type" value="mRNA"/>
</dbReference>
<dbReference type="CCDS" id="CCDS15841.1"/>
<dbReference type="PIR" id="A57701">
    <property type="entry name" value="A57701"/>
</dbReference>
<dbReference type="RefSeq" id="NP_034015.1">
    <property type="nucleotide sequence ID" value="NM_009885.2"/>
</dbReference>
<dbReference type="SMR" id="Q64285"/>
<dbReference type="FunCoup" id="Q64285">
    <property type="interactions" value="154"/>
</dbReference>
<dbReference type="STRING" id="10090.ENSMUSP00000028161"/>
<dbReference type="SwissLipids" id="SLP:000001681"/>
<dbReference type="ESTHER" id="mouse-pches">
    <property type="family name" value="Cholesterol_esterase"/>
</dbReference>
<dbReference type="MEROPS" id="S09.985"/>
<dbReference type="GlyCosmos" id="Q64285">
    <property type="glycosylation" value="2 sites, No reported glycans"/>
</dbReference>
<dbReference type="GlyGen" id="Q64285">
    <property type="glycosylation" value="3 sites"/>
</dbReference>
<dbReference type="PhosphoSitePlus" id="Q64285"/>
<dbReference type="PaxDb" id="10090-ENSMUSP00000028161"/>
<dbReference type="ProteomicsDB" id="281531"/>
<dbReference type="Antibodypedia" id="1990">
    <property type="antibodies" value="228 antibodies from 27 providers"/>
</dbReference>
<dbReference type="DNASU" id="12613"/>
<dbReference type="Ensembl" id="ENSMUST00000028161.6">
    <property type="protein sequence ID" value="ENSMUSP00000028161.6"/>
    <property type="gene ID" value="ENSMUSG00000026818.6"/>
</dbReference>
<dbReference type="GeneID" id="12613"/>
<dbReference type="KEGG" id="mmu:12613"/>
<dbReference type="UCSC" id="uc008iyr.1">
    <property type="organism name" value="mouse"/>
</dbReference>
<dbReference type="AGR" id="MGI:88374"/>
<dbReference type="CTD" id="1056"/>
<dbReference type="MGI" id="MGI:88374">
    <property type="gene designation" value="Cel"/>
</dbReference>
<dbReference type="VEuPathDB" id="HostDB:ENSMUSG00000026818"/>
<dbReference type="eggNOG" id="KOG1516">
    <property type="taxonomic scope" value="Eukaryota"/>
</dbReference>
<dbReference type="GeneTree" id="ENSGT00940000156231"/>
<dbReference type="HOGENOM" id="CLU_006586_13_1_1"/>
<dbReference type="InParanoid" id="Q64285"/>
<dbReference type="OMA" id="ALFRYMK"/>
<dbReference type="OrthoDB" id="19653at2759"/>
<dbReference type="PhylomeDB" id="Q64285"/>
<dbReference type="TreeFam" id="TF315470"/>
<dbReference type="BRENDA" id="3.1.1.13">
    <property type="organism ID" value="3474"/>
</dbReference>
<dbReference type="Reactome" id="R-MMU-192456">
    <property type="pathway name" value="Digestion of dietary lipid"/>
</dbReference>
<dbReference type="BioGRID-ORCS" id="12613">
    <property type="hits" value="1 hit in 81 CRISPR screens"/>
</dbReference>
<dbReference type="ChiTaRS" id="Cel">
    <property type="organism name" value="mouse"/>
</dbReference>
<dbReference type="PRO" id="PR:Q64285"/>
<dbReference type="Proteomes" id="UP000000589">
    <property type="component" value="Chromosome 2"/>
</dbReference>
<dbReference type="RNAct" id="Q64285">
    <property type="molecule type" value="protein"/>
</dbReference>
<dbReference type="Bgee" id="ENSMUSG00000026818">
    <property type="expression patterns" value="Expressed in pyloric antrum and 37 other cell types or tissues"/>
</dbReference>
<dbReference type="ExpressionAtlas" id="Q64285">
    <property type="expression patterns" value="baseline and differential"/>
</dbReference>
<dbReference type="GO" id="GO:0005737">
    <property type="term" value="C:cytoplasm"/>
    <property type="evidence" value="ECO:0000250"/>
    <property type="project" value="UniProtKB"/>
</dbReference>
<dbReference type="GO" id="GO:0005576">
    <property type="term" value="C:extracellular region"/>
    <property type="evidence" value="ECO:0007669"/>
    <property type="project" value="UniProtKB-SubCell"/>
</dbReference>
<dbReference type="GO" id="GO:0016020">
    <property type="term" value="C:membrane"/>
    <property type="evidence" value="ECO:0007669"/>
    <property type="project" value="GOC"/>
</dbReference>
<dbReference type="GO" id="GO:0008126">
    <property type="term" value="F:acetylesterase activity"/>
    <property type="evidence" value="ECO:0007669"/>
    <property type="project" value="UniProtKB-EC"/>
</dbReference>
<dbReference type="GO" id="GO:0004771">
    <property type="term" value="F:sterol ester esterase activity"/>
    <property type="evidence" value="ECO:0007669"/>
    <property type="project" value="UniProtKB-EC"/>
</dbReference>
<dbReference type="GO" id="GO:0004806">
    <property type="term" value="F:triacylglycerol lipase activity"/>
    <property type="evidence" value="ECO:0007669"/>
    <property type="project" value="UniProtKB-EC"/>
</dbReference>
<dbReference type="GO" id="GO:0046514">
    <property type="term" value="P:ceramide catabolic process"/>
    <property type="evidence" value="ECO:0000315"/>
    <property type="project" value="MGI"/>
</dbReference>
<dbReference type="GO" id="GO:0030299">
    <property type="term" value="P:intestinal cholesterol absorption"/>
    <property type="evidence" value="ECO:0007669"/>
    <property type="project" value="Ensembl"/>
</dbReference>
<dbReference type="GO" id="GO:0030157">
    <property type="term" value="P:pancreatic juice secretion"/>
    <property type="evidence" value="ECO:0007669"/>
    <property type="project" value="Ensembl"/>
</dbReference>
<dbReference type="CDD" id="cd00312">
    <property type="entry name" value="Esterase_lipase"/>
    <property type="match status" value="1"/>
</dbReference>
<dbReference type="FunFam" id="3.40.50.1820:FF:000100">
    <property type="entry name" value="Carboxylic ester hydrolase"/>
    <property type="match status" value="1"/>
</dbReference>
<dbReference type="Gene3D" id="3.40.50.1820">
    <property type="entry name" value="alpha/beta hydrolase"/>
    <property type="match status" value="1"/>
</dbReference>
<dbReference type="InterPro" id="IPR029058">
    <property type="entry name" value="AB_hydrolase_fold"/>
</dbReference>
<dbReference type="InterPro" id="IPR002018">
    <property type="entry name" value="CarbesteraseB"/>
</dbReference>
<dbReference type="InterPro" id="IPR019826">
    <property type="entry name" value="Carboxylesterase_B_AS"/>
</dbReference>
<dbReference type="InterPro" id="IPR019819">
    <property type="entry name" value="Carboxylesterase_B_CS"/>
</dbReference>
<dbReference type="InterPro" id="IPR051093">
    <property type="entry name" value="Neuroligin/BSAL"/>
</dbReference>
<dbReference type="PANTHER" id="PTHR43903">
    <property type="entry name" value="NEUROLIGIN"/>
    <property type="match status" value="1"/>
</dbReference>
<dbReference type="Pfam" id="PF00135">
    <property type="entry name" value="COesterase"/>
    <property type="match status" value="1"/>
</dbReference>
<dbReference type="SUPFAM" id="SSF53474">
    <property type="entry name" value="alpha/beta-Hydrolases"/>
    <property type="match status" value="1"/>
</dbReference>
<dbReference type="PROSITE" id="PS00122">
    <property type="entry name" value="CARBOXYLESTERASE_B_1"/>
    <property type="match status" value="1"/>
</dbReference>
<dbReference type="PROSITE" id="PS00941">
    <property type="entry name" value="CARBOXYLESTERASE_B_2"/>
    <property type="match status" value="1"/>
</dbReference>
<name>CEL_MOUSE</name>
<accession>Q64285</accession>
<organism>
    <name type="scientific">Mus musculus</name>
    <name type="common">Mouse</name>
    <dbReference type="NCBI Taxonomy" id="10090"/>
    <lineage>
        <taxon>Eukaryota</taxon>
        <taxon>Metazoa</taxon>
        <taxon>Chordata</taxon>
        <taxon>Craniata</taxon>
        <taxon>Vertebrata</taxon>
        <taxon>Euteleostomi</taxon>
        <taxon>Mammalia</taxon>
        <taxon>Eutheria</taxon>
        <taxon>Euarchontoglires</taxon>
        <taxon>Glires</taxon>
        <taxon>Rodentia</taxon>
        <taxon>Myomorpha</taxon>
        <taxon>Muroidea</taxon>
        <taxon>Muridae</taxon>
        <taxon>Murinae</taxon>
        <taxon>Mus</taxon>
        <taxon>Mus</taxon>
    </lineage>
</organism>
<protein>
    <recommendedName>
        <fullName>Bile salt-activated lipase</fullName>
        <shortName>BAL</shortName>
        <ecNumber evidence="3">3.1.1.13</ecNumber>
        <ecNumber evidence="3">3.1.1.3</ecNumber>
        <ecNumber evidence="3">3.1.1.6</ecNumber>
    </recommendedName>
    <alternativeName>
        <fullName>Bile salt-stimulated lipase</fullName>
        <shortName>BSSL</shortName>
    </alternativeName>
    <alternativeName>
        <fullName>Carboxyl ester lipase</fullName>
    </alternativeName>
    <alternativeName>
        <fullName>Cholesterol esterase</fullName>
    </alternativeName>
    <alternativeName>
        <fullName>Pancreatic lysophospholipase</fullName>
    </alternativeName>
    <alternativeName>
        <fullName>Sterol esterase</fullName>
    </alternativeName>
</protein>
<comment type="function">
    <text evidence="3 8">Catalyzes the hydrolysis of a wide range of substrates including cholesteryl esters, phospholipids, lysophospholipids, di- and tri-acylglycerols, and fatty acid esters of hydroxy fatty acids (FAHFAs) (PubMed:27509211). Preferentially hydrolyzes FAHFAs with the ester bond further away from the carboxylate. Unsaturated FAHFAs are hydrolyzed more quickly than saturated FAHFAs (PubMed:27509211). Has an essential role in the complete digestion of dietary lipids and their intestinal absorption, along with the absorption of fat-soluble vitamins (By similarity).</text>
</comment>
<comment type="catalytic activity">
    <reaction evidence="3">
        <text>a triacylglycerol + H2O = a diacylglycerol + a fatty acid + H(+)</text>
        <dbReference type="Rhea" id="RHEA:12044"/>
        <dbReference type="ChEBI" id="CHEBI:15377"/>
        <dbReference type="ChEBI" id="CHEBI:15378"/>
        <dbReference type="ChEBI" id="CHEBI:17855"/>
        <dbReference type="ChEBI" id="CHEBI:18035"/>
        <dbReference type="ChEBI" id="CHEBI:28868"/>
        <dbReference type="EC" id="3.1.1.3"/>
    </reaction>
    <physiologicalReaction direction="left-to-right" evidence="3">
        <dbReference type="Rhea" id="RHEA:12045"/>
    </physiologicalReaction>
</comment>
<comment type="catalytic activity">
    <reaction evidence="8">
        <text>1,2,3-tri-(9Z-octadecenoyl)-glycerol + H2O = di-(9Z)-octadecenoylglycerol + (9Z)-octadecenoate + H(+)</text>
        <dbReference type="Rhea" id="RHEA:38575"/>
        <dbReference type="ChEBI" id="CHEBI:15377"/>
        <dbReference type="ChEBI" id="CHEBI:15378"/>
        <dbReference type="ChEBI" id="CHEBI:30823"/>
        <dbReference type="ChEBI" id="CHEBI:53753"/>
        <dbReference type="ChEBI" id="CHEBI:75945"/>
    </reaction>
    <physiologicalReaction direction="left-to-right" evidence="10">
        <dbReference type="Rhea" id="RHEA:38576"/>
    </physiologicalReaction>
</comment>
<comment type="catalytic activity">
    <reaction evidence="3">
        <text>1,2,3-trioctanoylglycerol + H2O = dioctanoylglycerol + octanoate + H(+)</text>
        <dbReference type="Rhea" id="RHEA:47864"/>
        <dbReference type="ChEBI" id="CHEBI:15377"/>
        <dbReference type="ChEBI" id="CHEBI:15378"/>
        <dbReference type="ChEBI" id="CHEBI:25646"/>
        <dbReference type="ChEBI" id="CHEBI:76978"/>
        <dbReference type="ChEBI" id="CHEBI:88066"/>
    </reaction>
    <physiologicalReaction direction="left-to-right" evidence="3">
        <dbReference type="Rhea" id="RHEA:47865"/>
    </physiologicalReaction>
</comment>
<comment type="catalytic activity">
    <reaction evidence="3">
        <text>a sterol ester + H2O = a sterol + a fatty acid + H(+)</text>
        <dbReference type="Rhea" id="RHEA:10100"/>
        <dbReference type="ChEBI" id="CHEBI:15377"/>
        <dbReference type="ChEBI" id="CHEBI:15378"/>
        <dbReference type="ChEBI" id="CHEBI:15889"/>
        <dbReference type="ChEBI" id="CHEBI:28868"/>
        <dbReference type="ChEBI" id="CHEBI:35915"/>
        <dbReference type="EC" id="3.1.1.13"/>
    </reaction>
    <physiologicalReaction direction="left-to-right" evidence="3">
        <dbReference type="Rhea" id="RHEA:10101"/>
    </physiologicalReaction>
</comment>
<comment type="catalytic activity">
    <reaction evidence="3">
        <text>an acetyl ester + H2O = an aliphatic alcohol + acetate + H(+)</text>
        <dbReference type="Rhea" id="RHEA:12957"/>
        <dbReference type="ChEBI" id="CHEBI:2571"/>
        <dbReference type="ChEBI" id="CHEBI:15377"/>
        <dbReference type="ChEBI" id="CHEBI:15378"/>
        <dbReference type="ChEBI" id="CHEBI:30089"/>
        <dbReference type="ChEBI" id="CHEBI:47622"/>
        <dbReference type="EC" id="3.1.1.6"/>
    </reaction>
    <physiologicalReaction direction="left-to-right" evidence="3">
        <dbReference type="Rhea" id="RHEA:12958"/>
    </physiologicalReaction>
</comment>
<comment type="catalytic activity">
    <reaction evidence="2">
        <text>a butanoate ester + H2O = an aliphatic alcohol + butanoate + H(+)</text>
        <dbReference type="Rhea" id="RHEA:47348"/>
        <dbReference type="ChEBI" id="CHEBI:2571"/>
        <dbReference type="ChEBI" id="CHEBI:15377"/>
        <dbReference type="ChEBI" id="CHEBI:15378"/>
        <dbReference type="ChEBI" id="CHEBI:17968"/>
        <dbReference type="ChEBI" id="CHEBI:50477"/>
    </reaction>
    <physiologicalReaction direction="left-to-right" evidence="2">
        <dbReference type="Rhea" id="RHEA:47349"/>
    </physiologicalReaction>
</comment>
<comment type="catalytic activity">
    <reaction evidence="8">
        <text>9-hexadecanoyloxy-octadecanoate + H2O = 9-hydroxy-octadecanoate + hexadecanoate + H(+)</text>
        <dbReference type="Rhea" id="RHEA:52052"/>
        <dbReference type="ChEBI" id="CHEBI:7896"/>
        <dbReference type="ChEBI" id="CHEBI:15377"/>
        <dbReference type="ChEBI" id="CHEBI:15378"/>
        <dbReference type="ChEBI" id="CHEBI:83670"/>
        <dbReference type="ChEBI" id="CHEBI:136286"/>
    </reaction>
    <physiologicalReaction direction="left-to-right" evidence="10">
        <dbReference type="Rhea" id="RHEA:52053"/>
    </physiologicalReaction>
</comment>
<comment type="catalytic activity">
    <reaction evidence="8">
        <text>9-(9Z-octadecenoyloxy)-octadecanoate + H2O = 9-hydroxy-octadecanoate + (9Z)-octadecenoate + H(+)</text>
        <dbReference type="Rhea" id="RHEA:52048"/>
        <dbReference type="ChEBI" id="CHEBI:15377"/>
        <dbReference type="ChEBI" id="CHEBI:15378"/>
        <dbReference type="ChEBI" id="CHEBI:30823"/>
        <dbReference type="ChEBI" id="CHEBI:136282"/>
        <dbReference type="ChEBI" id="CHEBI:136286"/>
    </reaction>
    <physiologicalReaction direction="left-to-right" evidence="10">
        <dbReference type="Rhea" id="RHEA:52049"/>
    </physiologicalReaction>
</comment>
<comment type="catalytic activity">
    <reaction evidence="8">
        <text>cholesteryl (9Z-octadecenoate) + H2O = cholesterol + (9Z)-octadecenoate + H(+)</text>
        <dbReference type="Rhea" id="RHEA:33875"/>
        <dbReference type="ChEBI" id="CHEBI:15377"/>
        <dbReference type="ChEBI" id="CHEBI:15378"/>
        <dbReference type="ChEBI" id="CHEBI:16113"/>
        <dbReference type="ChEBI" id="CHEBI:30823"/>
        <dbReference type="ChEBI" id="CHEBI:46898"/>
    </reaction>
    <physiologicalReaction direction="left-to-right" evidence="10">
        <dbReference type="Rhea" id="RHEA:33876"/>
    </physiologicalReaction>
</comment>
<comment type="catalytic activity">
    <reaction evidence="2">
        <text>1-hexadecanoyl-sn-glycero-3-phosphocholine + H2O = sn-glycerol 3-phosphocholine + hexadecanoate + H(+)</text>
        <dbReference type="Rhea" id="RHEA:40435"/>
        <dbReference type="ChEBI" id="CHEBI:7896"/>
        <dbReference type="ChEBI" id="CHEBI:15377"/>
        <dbReference type="ChEBI" id="CHEBI:15378"/>
        <dbReference type="ChEBI" id="CHEBI:16870"/>
        <dbReference type="ChEBI" id="CHEBI:72998"/>
    </reaction>
    <physiologicalReaction direction="left-to-right" evidence="2">
        <dbReference type="Rhea" id="RHEA:40436"/>
    </physiologicalReaction>
</comment>
<comment type="catalytic activity">
    <reaction evidence="8">
        <text>12-hexadecanoyloxy-octadecanoate + H2O = 12-hydroxyoctadecanoate + hexadecanoate + H(+)</text>
        <dbReference type="Rhea" id="RHEA:52056"/>
        <dbReference type="ChEBI" id="CHEBI:7896"/>
        <dbReference type="ChEBI" id="CHEBI:15377"/>
        <dbReference type="ChEBI" id="CHEBI:15378"/>
        <dbReference type="ChEBI" id="CHEBI:83677"/>
        <dbReference type="ChEBI" id="CHEBI:84201"/>
    </reaction>
    <physiologicalReaction direction="left-to-right" evidence="10">
        <dbReference type="Rhea" id="RHEA:52057"/>
    </physiologicalReaction>
</comment>
<comment type="catalytic activity">
    <reaction evidence="8">
        <text>12-(9Z-octadecenoyloxy)-octadecanoate + H2O = 12-hydroxyoctadecanoate + (9Z)-octadecenoate + H(+)</text>
        <dbReference type="Rhea" id="RHEA:52060"/>
        <dbReference type="ChEBI" id="CHEBI:15377"/>
        <dbReference type="ChEBI" id="CHEBI:15378"/>
        <dbReference type="ChEBI" id="CHEBI:30823"/>
        <dbReference type="ChEBI" id="CHEBI:84201"/>
        <dbReference type="ChEBI" id="CHEBI:136302"/>
    </reaction>
    <physiologicalReaction direction="left-to-right" evidence="10">
        <dbReference type="Rhea" id="RHEA:52061"/>
    </physiologicalReaction>
</comment>
<comment type="catalytic activity">
    <reaction evidence="8">
        <text>13-(9Z-octadecenoyloxy)-octadecanoate + H2O = 13-hydroxy-octadecanoate + (9Z)-octadecenoate + H(+)</text>
        <dbReference type="Rhea" id="RHEA:52064"/>
        <dbReference type="ChEBI" id="CHEBI:15377"/>
        <dbReference type="ChEBI" id="CHEBI:15378"/>
        <dbReference type="ChEBI" id="CHEBI:30823"/>
        <dbReference type="ChEBI" id="CHEBI:136303"/>
        <dbReference type="ChEBI" id="CHEBI:136304"/>
    </reaction>
    <physiologicalReaction direction="left-to-right" evidence="10">
        <dbReference type="Rhea" id="RHEA:52065"/>
    </physiologicalReaction>
</comment>
<comment type="catalytic activity">
    <reaction evidence="8">
        <text>9-(9Z-hexadecenoyloxy)-octadecanoate + H2O = (9Z)-hexadecenoate + 9-hydroxy-octadecanoate + H(+)</text>
        <dbReference type="Rhea" id="RHEA:52068"/>
        <dbReference type="ChEBI" id="CHEBI:15377"/>
        <dbReference type="ChEBI" id="CHEBI:15378"/>
        <dbReference type="ChEBI" id="CHEBI:32372"/>
        <dbReference type="ChEBI" id="CHEBI:136286"/>
        <dbReference type="ChEBI" id="CHEBI:136309"/>
    </reaction>
    <physiologicalReaction direction="left-to-right" evidence="10">
        <dbReference type="Rhea" id="RHEA:52069"/>
    </physiologicalReaction>
</comment>
<comment type="catalytic activity">
    <reaction evidence="8">
        <text>12-(9Z-hexadecenoyloxy)-octadecanoate + H2O = 12-hydroxyoctadecanoate + (9Z)-hexadecenoate + H(+)</text>
        <dbReference type="Rhea" id="RHEA:52072"/>
        <dbReference type="ChEBI" id="CHEBI:15377"/>
        <dbReference type="ChEBI" id="CHEBI:15378"/>
        <dbReference type="ChEBI" id="CHEBI:32372"/>
        <dbReference type="ChEBI" id="CHEBI:84201"/>
        <dbReference type="ChEBI" id="CHEBI:136312"/>
    </reaction>
    <physiologicalReaction direction="left-to-right" evidence="10">
        <dbReference type="Rhea" id="RHEA:52073"/>
    </physiologicalReaction>
</comment>
<comment type="catalytic activity">
    <reaction evidence="8">
        <text>13-(9Z-hexadecenoyloxy)-octadecanoate + H2O = 13-hydroxy-octadecanoate + (9Z)-hexadecenoate + H(+)</text>
        <dbReference type="Rhea" id="RHEA:52076"/>
        <dbReference type="ChEBI" id="CHEBI:15377"/>
        <dbReference type="ChEBI" id="CHEBI:15378"/>
        <dbReference type="ChEBI" id="CHEBI:32372"/>
        <dbReference type="ChEBI" id="CHEBI:136304"/>
        <dbReference type="ChEBI" id="CHEBI:136315"/>
    </reaction>
    <physiologicalReaction direction="left-to-right" evidence="10">
        <dbReference type="Rhea" id="RHEA:52077"/>
    </physiologicalReaction>
</comment>
<comment type="catalytic activity">
    <reaction evidence="8">
        <text>12-octadecanoyloxy-octadecanoate + H2O = 12-hydroxyoctadecanoate + octadecanoate + H(+)</text>
        <dbReference type="Rhea" id="RHEA:52080"/>
        <dbReference type="ChEBI" id="CHEBI:15377"/>
        <dbReference type="ChEBI" id="CHEBI:15378"/>
        <dbReference type="ChEBI" id="CHEBI:25629"/>
        <dbReference type="ChEBI" id="CHEBI:84201"/>
        <dbReference type="ChEBI" id="CHEBI:136330"/>
    </reaction>
    <physiologicalReaction direction="left-to-right" evidence="10">
        <dbReference type="Rhea" id="RHEA:52081"/>
    </physiologicalReaction>
</comment>
<comment type="catalytic activity">
    <reaction evidence="8">
        <text>13-octadecanoyloxy-octadecanoate + H2O = 13-hydroxy-octadecanoate + octadecanoate + H(+)</text>
        <dbReference type="Rhea" id="RHEA:52084"/>
        <dbReference type="ChEBI" id="CHEBI:15377"/>
        <dbReference type="ChEBI" id="CHEBI:15378"/>
        <dbReference type="ChEBI" id="CHEBI:25629"/>
        <dbReference type="ChEBI" id="CHEBI:136304"/>
        <dbReference type="ChEBI" id="CHEBI:136335"/>
    </reaction>
    <physiologicalReaction direction="left-to-right" evidence="10">
        <dbReference type="Rhea" id="RHEA:52085"/>
    </physiologicalReaction>
</comment>
<comment type="catalytic activity">
    <reaction evidence="8">
        <text>5-(9Z-hexadecenoyloxy)-octadecanoate + H2O = 5-hydroxy-octadecanoate + (9Z)-hexadecenoate + H(+)</text>
        <dbReference type="Rhea" id="RHEA:52092"/>
        <dbReference type="ChEBI" id="CHEBI:15377"/>
        <dbReference type="ChEBI" id="CHEBI:15378"/>
        <dbReference type="ChEBI" id="CHEBI:32372"/>
        <dbReference type="ChEBI" id="CHEBI:136369"/>
        <dbReference type="ChEBI" id="CHEBI:136370"/>
    </reaction>
    <physiologicalReaction direction="left-to-right" evidence="10">
        <dbReference type="Rhea" id="RHEA:52093"/>
    </physiologicalReaction>
</comment>
<comment type="catalytic activity">
    <reaction evidence="8">
        <text>9-octadecanoyloxy-octadecanoate + H2O = 9-hydroxy-octadecanoate + octadecanoate + H(+)</text>
        <dbReference type="Rhea" id="RHEA:52096"/>
        <dbReference type="ChEBI" id="CHEBI:15377"/>
        <dbReference type="ChEBI" id="CHEBI:15378"/>
        <dbReference type="ChEBI" id="CHEBI:25629"/>
        <dbReference type="ChEBI" id="CHEBI:136286"/>
        <dbReference type="ChEBI" id="CHEBI:136373"/>
    </reaction>
    <physiologicalReaction direction="left-to-right" evidence="10">
        <dbReference type="Rhea" id="RHEA:52097"/>
    </physiologicalReaction>
</comment>
<comment type="activity regulation">
    <text evidence="8">Activated by bile salts such as sodium taurocholate.</text>
</comment>
<comment type="subunit">
    <text evidence="7">Interacts with CLC.</text>
</comment>
<comment type="subcellular location">
    <subcellularLocation>
        <location evidence="3">Secreted</location>
    </subcellularLocation>
</comment>
<comment type="tissue specificity">
    <text evidence="7">EXpressed by eosinophils.</text>
</comment>
<comment type="similarity">
    <text evidence="9">Belongs to the type-B carboxylesterase/lipase family.</text>
</comment>
<proteinExistence type="evidence at protein level"/>
<evidence type="ECO:0000250" key="1"/>
<evidence type="ECO:0000250" key="2">
    <source>
        <dbReference type="UniProtKB" id="P07882"/>
    </source>
</evidence>
<evidence type="ECO:0000250" key="3">
    <source>
        <dbReference type="UniProtKB" id="P19835"/>
    </source>
</evidence>
<evidence type="ECO:0000255" key="4"/>
<evidence type="ECO:0000255" key="5">
    <source>
        <dbReference type="PROSITE-ProRule" id="PRU10039"/>
    </source>
</evidence>
<evidence type="ECO:0000256" key="6">
    <source>
        <dbReference type="SAM" id="MobiDB-lite"/>
    </source>
</evidence>
<evidence type="ECO:0000269" key="7">
    <source>
    </source>
</evidence>
<evidence type="ECO:0000269" key="8">
    <source>
    </source>
</evidence>
<evidence type="ECO:0000305" key="9"/>
<evidence type="ECO:0000305" key="10">
    <source>
    </source>
</evidence>
<gene>
    <name type="primary">Cel</name>
    <name type="synonym">Lip1</name>
</gene>
<sequence length="599" mass="65813">MGRLEVLFLGLTCCLAAACAAKLGAVYTEGGFVEGVNKKLSLLGGDSVDIFKGIPFATAKTLENPQRHPGWQGTLKATNFKKRCLQATITQDNTYGQEDCLYLNIWVPQGRKQVSHNLPVMVWIYGGAFLMGSGQGANFLKNYLYDGEEIATRGNVIVVTFNYRVGPLGFLSTGDANLPGNFGLRDQHMAIAWVKRNIAAFGGDPDNITIFGESAGAASVSLQTLSPYNKGLIRRAISQSGMALSPWAIQKNPLFWAKTIAKKVGCPTEDTGKMAACLKITDPRALTLAYKLPVKKQEYPVVHYLAFIPVIDGDFIPDDPINLYNNTADIDYIAGINNMDGHLFATIDVPAVDKTKQTVTEEDFYRLVSGHTVAKGLKGAQATFDIYTESWAQDPSQENMKKTVVAFETDVLFLIPTEIALAQHKAHAKSAKTYSYLFSHPSRMPIYPKWMGADHADDLQYVFGKPFATPLGYRPQDRAVSKAMIAYWTNFARSGDPNMGNSPVPTHWYPYTLENGNYLDITKTITSASMKEHLREKFLKFWAVTFEVLPTVTGDQDTLTPPEDDSEVAPDPPSDDSQVVPVPPTDDSVEAQMPATIGF</sequence>
<feature type="signal peptide" evidence="1">
    <location>
        <begin position="1"/>
        <end position="20"/>
    </location>
</feature>
<feature type="chain" id="PRO_0000008632" description="Bile salt-activated lipase">
    <location>
        <begin position="21"/>
        <end position="599"/>
    </location>
</feature>
<feature type="repeat" description="1">
    <location>
        <begin position="559"/>
        <end position="569"/>
    </location>
</feature>
<feature type="repeat" description="2">
    <location>
        <begin position="570"/>
        <end position="580"/>
    </location>
</feature>
<feature type="repeat" description="3">
    <location>
        <begin position="581"/>
        <end position="588"/>
    </location>
</feature>
<feature type="region of interest" description="Disordered" evidence="6">
    <location>
        <begin position="553"/>
        <end position="599"/>
    </location>
</feature>
<feature type="region of interest" description="4 X 11 AA tandem repeats, O-glycosylated region">
    <location>
        <begin position="559"/>
        <end position="588"/>
    </location>
</feature>
<feature type="active site" description="Acyl-ester intermediate" evidence="5">
    <location>
        <position position="214"/>
    </location>
</feature>
<feature type="active site" description="Charge relay system" evidence="1">
    <location>
        <position position="340"/>
    </location>
</feature>
<feature type="active site" description="Charge relay system" evidence="1">
    <location>
        <position position="455"/>
    </location>
</feature>
<feature type="glycosylation site" description="N-linked (GlcNAc...) asparagine" evidence="4">
    <location>
        <position position="207"/>
    </location>
</feature>
<feature type="glycosylation site" description="N-linked (GlcNAc...) asparagine" evidence="4">
    <location>
        <position position="325"/>
    </location>
</feature>
<feature type="disulfide bond" evidence="1">
    <location>
        <begin position="84"/>
        <end position="100"/>
    </location>
</feature>
<feature type="disulfide bond" evidence="1">
    <location>
        <begin position="266"/>
        <end position="277"/>
    </location>
</feature>